<sequence>MKLWFPYFLAIVFLHALGLALLFMANNASFYAAASMAYMLGAKHAFDADHIACIDNTIRKLTQQGKNAYGVGFYFSMGHSSVVILMTIISAFAIAWAKEHTPMLEEIGGVVGTLVSGLFLLIIGLLNAIILLDLLKIFKKSHSNESLSQQQNEEIERLLTSRGLLNRFFKPLFNFVSKSWHIYPIGFLFGLGFDTASEIALLALSSSAIKVSMVGMLSLPILFAAGMSLFDTLDGAFMLKAYDWAFKTPLRKIYYNISITALSVFIALFIGLIELFQVVSEKLHLKFENRLLRALQSLEFTDLGYYLVGLFVIAFLGSFFLWKIKFSKLES</sequence>
<gene>
    <name type="primary">nixA</name>
    <name type="ordered locus">HP_1077</name>
</gene>
<keyword id="KW-0997">Cell inner membrane</keyword>
<keyword id="KW-1003">Cell membrane</keyword>
<keyword id="KW-0472">Membrane</keyword>
<keyword id="KW-0533">Nickel</keyword>
<keyword id="KW-1185">Reference proteome</keyword>
<keyword id="KW-0812">Transmembrane</keyword>
<keyword id="KW-1133">Transmembrane helix</keyword>
<keyword id="KW-0813">Transport</keyword>
<name>NIXA_HELPY</name>
<protein>
    <recommendedName>
        <fullName>High-affinity nickel-transport protein NixA</fullName>
    </recommendedName>
</protein>
<organism>
    <name type="scientific">Helicobacter pylori (strain ATCC 700392 / 26695)</name>
    <name type="common">Campylobacter pylori</name>
    <dbReference type="NCBI Taxonomy" id="85962"/>
    <lineage>
        <taxon>Bacteria</taxon>
        <taxon>Pseudomonadati</taxon>
        <taxon>Campylobacterota</taxon>
        <taxon>Epsilonproteobacteria</taxon>
        <taxon>Campylobacterales</taxon>
        <taxon>Helicobacteraceae</taxon>
        <taxon>Helicobacter</taxon>
    </lineage>
</organism>
<evidence type="ECO:0000305" key="1"/>
<evidence type="ECO:0000305" key="2">
    <source>
    </source>
</evidence>
<reference key="1">
    <citation type="journal article" date="1995" name="Mol. Microbiol.">
        <title>Helicobacter pylori nickel-transport gene nixA: synthesis of catalytically active urease in Escherichia coli independent of growth conditions.</title>
        <authorList>
            <person name="Mobley H.L.T."/>
            <person name="Garner R.M."/>
            <person name="Bauerfeind P."/>
        </authorList>
    </citation>
    <scope>NUCLEOTIDE SEQUENCE [GENOMIC DNA] OF 24-331</scope>
    <source>
        <strain>ATCC 43504</strain>
    </source>
</reference>
<reference key="2">
    <citation type="journal article" date="1997" name="Nature">
        <title>The complete genome sequence of the gastric pathogen Helicobacter pylori.</title>
        <authorList>
            <person name="Tomb J.-F."/>
            <person name="White O."/>
            <person name="Kerlavage A.R."/>
            <person name="Clayton R.A."/>
            <person name="Sutton G.G."/>
            <person name="Fleischmann R.D."/>
            <person name="Ketchum K.A."/>
            <person name="Klenk H.-P."/>
            <person name="Gill S.R."/>
            <person name="Dougherty B.A."/>
            <person name="Nelson K.E."/>
            <person name="Quackenbush J."/>
            <person name="Zhou L."/>
            <person name="Kirkness E.F."/>
            <person name="Peterson S.N."/>
            <person name="Loftus B.J."/>
            <person name="Richardson D.L."/>
            <person name="Dodson R.J."/>
            <person name="Khalak H.G."/>
            <person name="Glodek A."/>
            <person name="McKenney K."/>
            <person name="FitzGerald L.M."/>
            <person name="Lee N."/>
            <person name="Adams M.D."/>
            <person name="Hickey E.K."/>
            <person name="Berg D.E."/>
            <person name="Gocayne J.D."/>
            <person name="Utterback T.R."/>
            <person name="Peterson J.D."/>
            <person name="Kelley J.M."/>
            <person name="Cotton M.D."/>
            <person name="Weidman J.F."/>
            <person name="Fujii C."/>
            <person name="Bowman C."/>
            <person name="Watthey L."/>
            <person name="Wallin E."/>
            <person name="Hayes W.S."/>
            <person name="Borodovsky M."/>
            <person name="Karp P.D."/>
            <person name="Smith H.O."/>
            <person name="Fraser C.M."/>
            <person name="Venter J.C."/>
        </authorList>
    </citation>
    <scope>NUCLEOTIDE SEQUENCE [LARGE SCALE GENOMIC DNA]</scope>
    <source>
        <strain>ATCC 700392 / 26695</strain>
    </source>
</reference>
<reference key="3">
    <citation type="journal article" date="2000" name="J. Bacteriol.">
        <title>Membrane topology of the NixA nickel transporter of Helicobacter pylori: two nickel transport-specific motifs within transmembrane helices II and III.</title>
        <authorList>
            <person name="Fulkerson J.F. Jr."/>
            <person name="Mobley H.L."/>
        </authorList>
    </citation>
    <scope>TOPOLOGY</scope>
</reference>
<feature type="chain" id="PRO_0000194007" description="High-affinity nickel-transport protein NixA">
    <location>
        <begin position="1"/>
        <end position="331"/>
    </location>
</feature>
<feature type="topological domain" description="Cytoplasmic" evidence="2">
    <location>
        <begin position="1"/>
        <end position="5"/>
    </location>
</feature>
<feature type="transmembrane region" description="Helical" evidence="1">
    <location>
        <begin position="6"/>
        <end position="26"/>
    </location>
</feature>
<feature type="topological domain" description="Periplasmic" evidence="2">
    <location>
        <begin position="27"/>
        <end position="33"/>
    </location>
</feature>
<feature type="transmembrane region" description="Helical" evidence="1">
    <location>
        <begin position="34"/>
        <end position="54"/>
    </location>
</feature>
<feature type="topological domain" description="Cytoplasmic" evidence="2">
    <location>
        <begin position="55"/>
        <end position="66"/>
    </location>
</feature>
<feature type="transmembrane region" description="Helical" evidence="1">
    <location>
        <begin position="67"/>
        <end position="87"/>
    </location>
</feature>
<feature type="topological domain" description="Periplasmic" evidence="2">
    <location>
        <begin position="88"/>
        <end position="113"/>
    </location>
</feature>
<feature type="transmembrane region" description="Helical" evidence="1">
    <location>
        <begin position="114"/>
        <end position="135"/>
    </location>
</feature>
<feature type="topological domain" description="Cytoplasmic" evidence="2">
    <location>
        <begin position="136"/>
        <end position="178"/>
    </location>
</feature>
<feature type="transmembrane region" description="Helical" evidence="1">
    <location>
        <begin position="179"/>
        <end position="199"/>
    </location>
</feature>
<feature type="topological domain" description="Periplasmic" evidence="2">
    <location>
        <begin position="200"/>
        <end position="225"/>
    </location>
</feature>
<feature type="transmembrane region" description="Helical" evidence="1">
    <location>
        <begin position="226"/>
        <end position="246"/>
    </location>
</feature>
<feature type="topological domain" description="Cytoplasmic" evidence="2">
    <location>
        <begin position="247"/>
        <end position="252"/>
    </location>
</feature>
<feature type="transmembrane region" description="Helical" evidence="1">
    <location>
        <begin position="253"/>
        <end position="273"/>
    </location>
</feature>
<feature type="topological domain" description="Periplasmic" evidence="2">
    <location>
        <begin position="274"/>
        <end position="302"/>
    </location>
</feature>
<feature type="transmembrane region" description="Helical" evidence="1">
    <location>
        <begin position="303"/>
        <end position="322"/>
    </location>
</feature>
<feature type="topological domain" description="Cytoplasmic" evidence="2">
    <location>
        <begin position="323"/>
        <end position="331"/>
    </location>
</feature>
<feature type="sequence conflict" description="In Ref. 1; CAA88633." evidence="1" ref="1">
    <original>RA</original>
    <variation>NT</variation>
    <location>
        <begin position="293"/>
        <end position="294"/>
    </location>
</feature>
<feature type="sequence conflict" description="In Ref. 1; CAA88633." evidence="1" ref="1">
    <original>L</original>
    <variation>F</variation>
    <location>
        <position position="303"/>
    </location>
</feature>
<accession>Q48262</accession>
<comment type="function">
    <text>High-affinity nickel intake protein. Imports nickel ions in an energy-dependent fashion. Necessary for the expression of catalytically active urease.</text>
</comment>
<comment type="subcellular location">
    <subcellularLocation>
        <location evidence="1">Cell inner membrane</location>
        <topology evidence="1">Multi-pass membrane protein</topology>
    </subcellularLocation>
</comment>
<comment type="similarity">
    <text evidence="1">Belongs to the NiCoT transporter (TC 2.A.52) family.</text>
</comment>
<proteinExistence type="evidence at protein level"/>
<dbReference type="EMBL" id="Z48742">
    <property type="protein sequence ID" value="CAA88633.1"/>
    <property type="molecule type" value="Genomic_DNA"/>
</dbReference>
<dbReference type="EMBL" id="AE000511">
    <property type="protein sequence ID" value="AAD08119.1"/>
    <property type="molecule type" value="Genomic_DNA"/>
</dbReference>
<dbReference type="PIR" id="E64654">
    <property type="entry name" value="S53113"/>
</dbReference>
<dbReference type="RefSeq" id="NP_207868.1">
    <property type="nucleotide sequence ID" value="NC_000915.1"/>
</dbReference>
<dbReference type="RefSeq" id="WP_000780430.1">
    <property type="nucleotide sequence ID" value="NC_018939.1"/>
</dbReference>
<dbReference type="DIP" id="DIP-3647N"/>
<dbReference type="IntAct" id="Q48262">
    <property type="interactions" value="4"/>
</dbReference>
<dbReference type="MINT" id="Q48262"/>
<dbReference type="STRING" id="85962.HP_1077"/>
<dbReference type="TCDB" id="2.A.52.1.4">
    <property type="family name" value="the ni(2+)-co(2+) transporter (nicot) family"/>
</dbReference>
<dbReference type="PaxDb" id="85962-C694_05565"/>
<dbReference type="EnsemblBacteria" id="AAD08119">
    <property type="protein sequence ID" value="AAD08119"/>
    <property type="gene ID" value="HP_1077"/>
</dbReference>
<dbReference type="KEGG" id="heo:C694_05565"/>
<dbReference type="KEGG" id="hpy:HP_1077"/>
<dbReference type="PATRIC" id="fig|85962.47.peg.1156"/>
<dbReference type="eggNOG" id="COG3376">
    <property type="taxonomic scope" value="Bacteria"/>
</dbReference>
<dbReference type="InParanoid" id="Q48262"/>
<dbReference type="OrthoDB" id="9776706at2"/>
<dbReference type="PhylomeDB" id="Q48262"/>
<dbReference type="PHI-base" id="PHI:6850"/>
<dbReference type="Proteomes" id="UP000000429">
    <property type="component" value="Chromosome"/>
</dbReference>
<dbReference type="GO" id="GO:0005886">
    <property type="term" value="C:plasma membrane"/>
    <property type="evidence" value="ECO:0007669"/>
    <property type="project" value="UniProtKB-SubCell"/>
</dbReference>
<dbReference type="GO" id="GO:0044750">
    <property type="term" value="F:high-affinity nickel cation transmembrane transporter activity"/>
    <property type="evidence" value="ECO:0000318"/>
    <property type="project" value="GO_Central"/>
</dbReference>
<dbReference type="GO" id="GO:0098716">
    <property type="term" value="P:nickel cation import across plasma membrane"/>
    <property type="evidence" value="ECO:0000318"/>
    <property type="project" value="GO_Central"/>
</dbReference>
<dbReference type="InterPro" id="IPR004688">
    <property type="entry name" value="Ni/Co_transpt"/>
</dbReference>
<dbReference type="InterPro" id="IPR011541">
    <property type="entry name" value="Ni/Co_transpt_high_affinity"/>
</dbReference>
<dbReference type="NCBIfam" id="TIGR00802">
    <property type="entry name" value="nico"/>
    <property type="match status" value="1"/>
</dbReference>
<dbReference type="PANTHER" id="PTHR31611">
    <property type="entry name" value="HIGH-AFFINITY NICKEL TRANSPORT PROTEIN NIC1"/>
    <property type="match status" value="1"/>
</dbReference>
<dbReference type="PANTHER" id="PTHR31611:SF0">
    <property type="entry name" value="HIGH-AFFINITY NICKEL TRANSPORT PROTEIN NIC1"/>
    <property type="match status" value="1"/>
</dbReference>
<dbReference type="Pfam" id="PF03824">
    <property type="entry name" value="NicO"/>
    <property type="match status" value="1"/>
</dbReference>